<comment type="function">
    <text evidence="1">Involved in allosteric regulation of aspartate carbamoyltransferase.</text>
</comment>
<comment type="cofactor">
    <cofactor evidence="1">
        <name>Zn(2+)</name>
        <dbReference type="ChEBI" id="CHEBI:29105"/>
    </cofactor>
    <text evidence="1">Binds 1 zinc ion per subunit.</text>
</comment>
<comment type="subunit">
    <text evidence="1">Contains catalytic and regulatory chains.</text>
</comment>
<comment type="similarity">
    <text evidence="1">Belongs to the PyrI family.</text>
</comment>
<accession>A3DM47</accession>
<dbReference type="EMBL" id="CP000575">
    <property type="protein sequence ID" value="ABN69707.1"/>
    <property type="molecule type" value="Genomic_DNA"/>
</dbReference>
<dbReference type="RefSeq" id="WP_011838898.1">
    <property type="nucleotide sequence ID" value="NC_009033.1"/>
</dbReference>
<dbReference type="SMR" id="A3DM47"/>
<dbReference type="STRING" id="399550.Smar_0600"/>
<dbReference type="GeneID" id="4907202"/>
<dbReference type="KEGG" id="smr:Smar_0600"/>
<dbReference type="eggNOG" id="arCOG04229">
    <property type="taxonomic scope" value="Archaea"/>
</dbReference>
<dbReference type="HOGENOM" id="CLU_128576_0_0_2"/>
<dbReference type="OrthoDB" id="7000at2157"/>
<dbReference type="Proteomes" id="UP000000254">
    <property type="component" value="Chromosome"/>
</dbReference>
<dbReference type="GO" id="GO:0009347">
    <property type="term" value="C:aspartate carbamoyltransferase complex"/>
    <property type="evidence" value="ECO:0007669"/>
    <property type="project" value="InterPro"/>
</dbReference>
<dbReference type="GO" id="GO:0046872">
    <property type="term" value="F:metal ion binding"/>
    <property type="evidence" value="ECO:0007669"/>
    <property type="project" value="UniProtKB-KW"/>
</dbReference>
<dbReference type="GO" id="GO:0006207">
    <property type="term" value="P:'de novo' pyrimidine nucleobase biosynthetic process"/>
    <property type="evidence" value="ECO:0007669"/>
    <property type="project" value="InterPro"/>
</dbReference>
<dbReference type="GO" id="GO:0006221">
    <property type="term" value="P:pyrimidine nucleotide biosynthetic process"/>
    <property type="evidence" value="ECO:0007669"/>
    <property type="project" value="UniProtKB-UniRule"/>
</dbReference>
<dbReference type="Gene3D" id="2.30.30.20">
    <property type="entry name" value="Aspartate carbamoyltransferase regulatory subunit, C-terminal domain"/>
    <property type="match status" value="1"/>
</dbReference>
<dbReference type="Gene3D" id="3.30.70.140">
    <property type="entry name" value="Aspartate carbamoyltransferase regulatory subunit, N-terminal domain"/>
    <property type="match status" value="1"/>
</dbReference>
<dbReference type="HAMAP" id="MF_00002">
    <property type="entry name" value="Asp_carb_tr_reg"/>
    <property type="match status" value="1"/>
</dbReference>
<dbReference type="InterPro" id="IPR020545">
    <property type="entry name" value="Asp_carbamoyltransf_reg_N"/>
</dbReference>
<dbReference type="InterPro" id="IPR002801">
    <property type="entry name" value="Asp_carbamoylTrfase_reg"/>
</dbReference>
<dbReference type="InterPro" id="IPR020542">
    <property type="entry name" value="Asp_carbamoyltrfase_reg_C"/>
</dbReference>
<dbReference type="InterPro" id="IPR036792">
    <property type="entry name" value="Asp_carbatrfase_reg_C_sf"/>
</dbReference>
<dbReference type="InterPro" id="IPR036793">
    <property type="entry name" value="Asp_carbatrfase_reg_N_sf"/>
</dbReference>
<dbReference type="NCBIfam" id="TIGR00240">
    <property type="entry name" value="ATCase_reg"/>
    <property type="match status" value="1"/>
</dbReference>
<dbReference type="PANTHER" id="PTHR35805">
    <property type="entry name" value="ASPARTATE CARBAMOYLTRANSFERASE REGULATORY CHAIN"/>
    <property type="match status" value="1"/>
</dbReference>
<dbReference type="PANTHER" id="PTHR35805:SF1">
    <property type="entry name" value="ASPARTATE CARBAMOYLTRANSFERASE REGULATORY CHAIN"/>
    <property type="match status" value="1"/>
</dbReference>
<dbReference type="Pfam" id="PF01948">
    <property type="entry name" value="PyrI"/>
    <property type="match status" value="1"/>
</dbReference>
<dbReference type="Pfam" id="PF02748">
    <property type="entry name" value="PyrI_C"/>
    <property type="match status" value="1"/>
</dbReference>
<dbReference type="SUPFAM" id="SSF57825">
    <property type="entry name" value="Aspartate carbamoyltransferase, Regulatory-chain, C-terminal domain"/>
    <property type="match status" value="1"/>
</dbReference>
<dbReference type="SUPFAM" id="SSF54893">
    <property type="entry name" value="Aspartate carbamoyltransferase, Regulatory-chain, N-terminal domain"/>
    <property type="match status" value="1"/>
</dbReference>
<organism>
    <name type="scientific">Staphylothermus marinus (strain ATCC 43588 / DSM 3639 / JCM 9404 / F1)</name>
    <dbReference type="NCBI Taxonomy" id="399550"/>
    <lineage>
        <taxon>Archaea</taxon>
        <taxon>Thermoproteota</taxon>
        <taxon>Thermoprotei</taxon>
        <taxon>Desulfurococcales</taxon>
        <taxon>Desulfurococcaceae</taxon>
        <taxon>Staphylothermus</taxon>
    </lineage>
</organism>
<protein>
    <recommendedName>
        <fullName evidence="1">Aspartate carbamoyltransferase regulatory chain</fullName>
    </recommendedName>
</protein>
<sequence length="164" mass="18347">MNPTNLSKYPNKLIVSKIRNGIVIDHIPAGKALKVLRVLGITGSEGLRVALVMNVESRKLGRKDIVKIEEKFLSMKELSLIALIAPTATINVIKEYKVVEKQRVEPPSIVKGLIKCPNPTCISRKKNEPIKSLFKLKSTNPIMLECQYCGYVLKGDEIEDYIES</sequence>
<name>PYRI_STAMF</name>
<feature type="chain" id="PRO_0000321510" description="Aspartate carbamoyltransferase regulatory chain">
    <location>
        <begin position="1"/>
        <end position="164"/>
    </location>
</feature>
<feature type="binding site" evidence="1">
    <location>
        <position position="116"/>
    </location>
    <ligand>
        <name>Zn(2+)</name>
        <dbReference type="ChEBI" id="CHEBI:29105"/>
    </ligand>
</feature>
<feature type="binding site" evidence="1">
    <location>
        <position position="121"/>
    </location>
    <ligand>
        <name>Zn(2+)</name>
        <dbReference type="ChEBI" id="CHEBI:29105"/>
    </ligand>
</feature>
<feature type="binding site" evidence="1">
    <location>
        <position position="146"/>
    </location>
    <ligand>
        <name>Zn(2+)</name>
        <dbReference type="ChEBI" id="CHEBI:29105"/>
    </ligand>
</feature>
<feature type="binding site" evidence="1">
    <location>
        <position position="149"/>
    </location>
    <ligand>
        <name>Zn(2+)</name>
        <dbReference type="ChEBI" id="CHEBI:29105"/>
    </ligand>
</feature>
<reference key="1">
    <citation type="journal article" date="2009" name="BMC Genomics">
        <title>The complete genome sequence of Staphylothermus marinus reveals differences in sulfur metabolism among heterotrophic Crenarchaeota.</title>
        <authorList>
            <person name="Anderson I.J."/>
            <person name="Dharmarajan L."/>
            <person name="Rodriguez J."/>
            <person name="Hooper S."/>
            <person name="Porat I."/>
            <person name="Ulrich L.E."/>
            <person name="Elkins J.G."/>
            <person name="Mavromatis K."/>
            <person name="Sun H."/>
            <person name="Land M."/>
            <person name="Lapidus A."/>
            <person name="Lucas S."/>
            <person name="Barry K."/>
            <person name="Huber H."/>
            <person name="Zhulin I.B."/>
            <person name="Whitman W.B."/>
            <person name="Mukhopadhyay B."/>
            <person name="Woese C."/>
            <person name="Bristow J."/>
            <person name="Kyrpides N."/>
        </authorList>
    </citation>
    <scope>NUCLEOTIDE SEQUENCE [LARGE SCALE GENOMIC DNA]</scope>
    <source>
        <strain>ATCC 43588 / DSM 3639 / JCM 9404 / F1</strain>
    </source>
</reference>
<reference key="2">
    <citation type="journal article" date="2009" name="Stand. Genomic Sci.">
        <title>Complete genome sequence of Staphylothermus marinus Stetter and Fiala 1986 type strain F1.</title>
        <authorList>
            <person name="Anderson I.J."/>
            <person name="Sun H."/>
            <person name="Lapidus A."/>
            <person name="Copeland A."/>
            <person name="Glavina Del Rio T."/>
            <person name="Tice H."/>
            <person name="Dalin E."/>
            <person name="Lucas S."/>
            <person name="Barry K."/>
            <person name="Land M."/>
            <person name="Richardson P."/>
            <person name="Huber H."/>
            <person name="Kyrpides N.C."/>
        </authorList>
    </citation>
    <scope>NUCLEOTIDE SEQUENCE [LARGE SCALE GENOMIC DNA]</scope>
    <source>
        <strain>ATCC 43588 / DSM 3639 / JCM 9404 / F1</strain>
    </source>
</reference>
<gene>
    <name evidence="1" type="primary">pyrI</name>
    <name type="ordered locus">Smar_0600</name>
</gene>
<proteinExistence type="inferred from homology"/>
<keyword id="KW-0479">Metal-binding</keyword>
<keyword id="KW-0665">Pyrimidine biosynthesis</keyword>
<keyword id="KW-1185">Reference proteome</keyword>
<keyword id="KW-0862">Zinc</keyword>
<evidence type="ECO:0000255" key="1">
    <source>
        <dbReference type="HAMAP-Rule" id="MF_00002"/>
    </source>
</evidence>